<organism>
    <name type="scientific">Mus musculus</name>
    <name type="common">Mouse</name>
    <dbReference type="NCBI Taxonomy" id="10090"/>
    <lineage>
        <taxon>Eukaryota</taxon>
        <taxon>Metazoa</taxon>
        <taxon>Chordata</taxon>
        <taxon>Craniata</taxon>
        <taxon>Vertebrata</taxon>
        <taxon>Euteleostomi</taxon>
        <taxon>Mammalia</taxon>
        <taxon>Eutheria</taxon>
        <taxon>Euarchontoglires</taxon>
        <taxon>Glires</taxon>
        <taxon>Rodentia</taxon>
        <taxon>Myomorpha</taxon>
        <taxon>Muroidea</taxon>
        <taxon>Muridae</taxon>
        <taxon>Murinae</taxon>
        <taxon>Mus</taxon>
        <taxon>Mus</taxon>
    </lineage>
</organism>
<comment type="function">
    <text evidence="2">Transcriptional regulator involved in developmental processes. Can activate POMC gene expression and repress the alpha glycoprotein subunit and thyroid-stimulating hormone beta promoters.</text>
</comment>
<comment type="subcellular location">
    <subcellularLocation>
        <location evidence="1">Nucleus</location>
    </subcellularLocation>
</comment>
<keyword id="KW-0010">Activator</keyword>
<keyword id="KW-0238">DNA-binding</keyword>
<keyword id="KW-0539">Nucleus</keyword>
<keyword id="KW-1185">Reference proteome</keyword>
<keyword id="KW-0678">Repressor</keyword>
<keyword id="KW-0804">Transcription</keyword>
<keyword id="KW-0805">Transcription regulation</keyword>
<accession>Q99ME7</accession>
<accession>Q0VBH2</accession>
<name>TBX19_MOUSE</name>
<dbReference type="EMBL" id="AF348321">
    <property type="protein sequence ID" value="AAK27153.1"/>
    <property type="molecule type" value="mRNA"/>
</dbReference>
<dbReference type="EMBL" id="AF345520">
    <property type="protein sequence ID" value="AAK64365.1"/>
    <property type="molecule type" value="mRNA"/>
</dbReference>
<dbReference type="EMBL" id="AK038666">
    <property type="protein sequence ID" value="BAC30088.1"/>
    <property type="molecule type" value="mRNA"/>
</dbReference>
<dbReference type="EMBL" id="BC120635">
    <property type="protein sequence ID" value="AAI20636.1"/>
    <property type="molecule type" value="mRNA"/>
</dbReference>
<dbReference type="EMBL" id="BC137731">
    <property type="protein sequence ID" value="AAI37732.1"/>
    <property type="molecule type" value="mRNA"/>
</dbReference>
<dbReference type="CCDS" id="CCDS15439.1"/>
<dbReference type="RefSeq" id="NP_114394.1">
    <property type="nucleotide sequence ID" value="NM_032005.4"/>
</dbReference>
<dbReference type="SMR" id="Q99ME7"/>
<dbReference type="BioGRID" id="219993">
    <property type="interactions" value="1"/>
</dbReference>
<dbReference type="FunCoup" id="Q99ME7">
    <property type="interactions" value="12"/>
</dbReference>
<dbReference type="STRING" id="10090.ENSMUSP00000027859"/>
<dbReference type="iPTMnet" id="Q99ME7"/>
<dbReference type="PhosphoSitePlus" id="Q99ME7"/>
<dbReference type="PaxDb" id="10090-ENSMUSP00000027859"/>
<dbReference type="ProteomicsDB" id="254833"/>
<dbReference type="Antibodypedia" id="1794">
    <property type="antibodies" value="143 antibodies from 22 providers"/>
</dbReference>
<dbReference type="DNASU" id="83993"/>
<dbReference type="Ensembl" id="ENSMUST00000027859.12">
    <property type="protein sequence ID" value="ENSMUSP00000027859.6"/>
    <property type="gene ID" value="ENSMUSG00000026572.12"/>
</dbReference>
<dbReference type="GeneID" id="83993"/>
<dbReference type="KEGG" id="mmu:83993"/>
<dbReference type="UCSC" id="uc007diw.1">
    <property type="organism name" value="mouse"/>
</dbReference>
<dbReference type="AGR" id="MGI:1891158"/>
<dbReference type="CTD" id="9095"/>
<dbReference type="MGI" id="MGI:1891158">
    <property type="gene designation" value="Tbx19"/>
</dbReference>
<dbReference type="VEuPathDB" id="HostDB:ENSMUSG00000026572"/>
<dbReference type="eggNOG" id="KOG3585">
    <property type="taxonomic scope" value="Eukaryota"/>
</dbReference>
<dbReference type="GeneTree" id="ENSGT00940000160000"/>
<dbReference type="InParanoid" id="Q99ME7"/>
<dbReference type="OMA" id="PHTKGAA"/>
<dbReference type="OrthoDB" id="7442607at2759"/>
<dbReference type="PhylomeDB" id="Q99ME7"/>
<dbReference type="TreeFam" id="TF106341"/>
<dbReference type="BioGRID-ORCS" id="83993">
    <property type="hits" value="4 hits in 78 CRISPR screens"/>
</dbReference>
<dbReference type="ChiTaRS" id="Tbx19">
    <property type="organism name" value="mouse"/>
</dbReference>
<dbReference type="PRO" id="PR:Q99ME7"/>
<dbReference type="Proteomes" id="UP000000589">
    <property type="component" value="Chromosome 1"/>
</dbReference>
<dbReference type="RNAct" id="Q99ME7">
    <property type="molecule type" value="protein"/>
</dbReference>
<dbReference type="Bgee" id="ENSMUSG00000026572">
    <property type="expression patterns" value="Expressed in animal zygote and 52 other cell types or tissues"/>
</dbReference>
<dbReference type="ExpressionAtlas" id="Q99ME7">
    <property type="expression patterns" value="baseline and differential"/>
</dbReference>
<dbReference type="GO" id="GO:0005634">
    <property type="term" value="C:nucleus"/>
    <property type="evidence" value="ECO:0007669"/>
    <property type="project" value="UniProtKB-SubCell"/>
</dbReference>
<dbReference type="GO" id="GO:0000987">
    <property type="term" value="F:cis-regulatory region sequence-specific DNA binding"/>
    <property type="evidence" value="ECO:0000314"/>
    <property type="project" value="MGI"/>
</dbReference>
<dbReference type="GO" id="GO:0003677">
    <property type="term" value="F:DNA binding"/>
    <property type="evidence" value="ECO:0000314"/>
    <property type="project" value="MGI"/>
</dbReference>
<dbReference type="GO" id="GO:0001228">
    <property type="term" value="F:DNA-binding transcription activator activity, RNA polymerase II-specific"/>
    <property type="evidence" value="ECO:0000314"/>
    <property type="project" value="NTNU_SB"/>
</dbReference>
<dbReference type="GO" id="GO:0003700">
    <property type="term" value="F:DNA-binding transcription factor activity"/>
    <property type="evidence" value="ECO:0000314"/>
    <property type="project" value="MGI"/>
</dbReference>
<dbReference type="GO" id="GO:0000978">
    <property type="term" value="F:RNA polymerase II cis-regulatory region sequence-specific DNA binding"/>
    <property type="evidence" value="ECO:0000315"/>
    <property type="project" value="NTNU_SB"/>
</dbReference>
<dbReference type="GO" id="GO:0045165">
    <property type="term" value="P:cell fate commitment"/>
    <property type="evidence" value="ECO:0000315"/>
    <property type="project" value="MGI"/>
</dbReference>
<dbReference type="GO" id="GO:0021983">
    <property type="term" value="P:pituitary gland development"/>
    <property type="evidence" value="ECO:0000315"/>
    <property type="project" value="MGI"/>
</dbReference>
<dbReference type="GO" id="GO:0045944">
    <property type="term" value="P:positive regulation of transcription by RNA polymerase II"/>
    <property type="evidence" value="ECO:0000314"/>
    <property type="project" value="NTNU_SB"/>
</dbReference>
<dbReference type="GO" id="GO:0045595">
    <property type="term" value="P:regulation of cell differentiation"/>
    <property type="evidence" value="ECO:0000315"/>
    <property type="project" value="MGI"/>
</dbReference>
<dbReference type="GO" id="GO:0042127">
    <property type="term" value="P:regulation of cell population proliferation"/>
    <property type="evidence" value="ECO:0000315"/>
    <property type="project" value="MGI"/>
</dbReference>
<dbReference type="GO" id="GO:0006355">
    <property type="term" value="P:regulation of DNA-templated transcription"/>
    <property type="evidence" value="ECO:0000314"/>
    <property type="project" value="MGI"/>
</dbReference>
<dbReference type="CDD" id="cd20201">
    <property type="entry name" value="T-box_TBX19-like"/>
    <property type="match status" value="1"/>
</dbReference>
<dbReference type="FunFam" id="2.60.40.820:FF:000002">
    <property type="entry name" value="T-box transcription factor Brachyury"/>
    <property type="match status" value="1"/>
</dbReference>
<dbReference type="Gene3D" id="2.60.40.820">
    <property type="entry name" value="Transcription factor, T-box"/>
    <property type="match status" value="1"/>
</dbReference>
<dbReference type="InterPro" id="IPR008967">
    <property type="entry name" value="p53-like_TF_DNA-bd_sf"/>
</dbReference>
<dbReference type="InterPro" id="IPR046360">
    <property type="entry name" value="T-box_DNA-bd"/>
</dbReference>
<dbReference type="InterPro" id="IPR036960">
    <property type="entry name" value="T-box_sf"/>
</dbReference>
<dbReference type="InterPro" id="IPR002070">
    <property type="entry name" value="TF_Brachyury"/>
</dbReference>
<dbReference type="InterPro" id="IPR001699">
    <property type="entry name" value="TF_T-box"/>
</dbReference>
<dbReference type="InterPro" id="IPR018186">
    <property type="entry name" value="TF_T-box_CS"/>
</dbReference>
<dbReference type="PANTHER" id="PTHR11267">
    <property type="entry name" value="T-BOX PROTEIN-RELATED"/>
    <property type="match status" value="1"/>
</dbReference>
<dbReference type="PANTHER" id="PTHR11267:SF114">
    <property type="entry name" value="T-BOX TRANSCRIPTION FACTOR TBX19"/>
    <property type="match status" value="1"/>
</dbReference>
<dbReference type="Pfam" id="PF00907">
    <property type="entry name" value="T-box"/>
    <property type="match status" value="1"/>
</dbReference>
<dbReference type="PRINTS" id="PR00938">
    <property type="entry name" value="BRACHYURY"/>
</dbReference>
<dbReference type="PRINTS" id="PR00937">
    <property type="entry name" value="TBOX"/>
</dbReference>
<dbReference type="SMART" id="SM00425">
    <property type="entry name" value="TBOX"/>
    <property type="match status" value="1"/>
</dbReference>
<dbReference type="SUPFAM" id="SSF49417">
    <property type="entry name" value="p53-like transcription factors"/>
    <property type="match status" value="1"/>
</dbReference>
<dbReference type="PROSITE" id="PS01283">
    <property type="entry name" value="TBOX_1"/>
    <property type="match status" value="1"/>
</dbReference>
<dbReference type="PROSITE" id="PS01264">
    <property type="entry name" value="TBOX_2"/>
    <property type="match status" value="1"/>
</dbReference>
<dbReference type="PROSITE" id="PS50252">
    <property type="entry name" value="TBOX_3"/>
    <property type="match status" value="1"/>
</dbReference>
<feature type="chain" id="PRO_0000184450" description="T-box transcription factor TBX19">
    <location>
        <begin position="1"/>
        <end position="446"/>
    </location>
</feature>
<feature type="DNA-binding region" description="T-box" evidence="1">
    <location>
        <begin position="43"/>
        <end position="216"/>
    </location>
</feature>
<protein>
    <recommendedName>
        <fullName evidence="3">T-box transcription factor TBX19</fullName>
        <shortName>T-box protein 19</shortName>
    </recommendedName>
    <alternativeName>
        <fullName>T-box factor, pituitary</fullName>
    </alternativeName>
</protein>
<reference key="1">
    <citation type="journal article" date="2001" name="Cell">
        <title>A pituitary cell-restricted T-box factor, Tpit, activates POMC transcription in cooperation with Pitx homeoproteins.</title>
        <authorList>
            <person name="Lamolet B."/>
            <person name="Pulichino A.-M."/>
            <person name="Lamonerie T."/>
            <person name="Gauthier Y."/>
            <person name="Brue T."/>
            <person name="Enjalbert A."/>
            <person name="Drouin J."/>
        </authorList>
    </citation>
    <scope>NUCLEOTIDE SEQUENCE [MRNA]</scope>
    <scope>FUNCTION</scope>
    <source>
        <strain>LAF1</strain>
    </source>
</reference>
<reference key="2">
    <citation type="journal article" date="2001" name="Proc. Natl. Acad. Sci. U.S.A.">
        <title>Tbx19, a tissue-selective regulator of POMC gene expression.</title>
        <authorList>
            <person name="Liu J."/>
            <person name="Lin C."/>
            <person name="Gleiberman A."/>
            <person name="Ohgi K.A."/>
            <person name="Herman T."/>
            <person name="Huang H.P."/>
            <person name="Tsai M.J."/>
            <person name="Rosenfeld M.G."/>
        </authorList>
    </citation>
    <scope>NUCLEOTIDE SEQUENCE [MRNA]</scope>
    <source>
        <strain>C57BL/6J</strain>
    </source>
</reference>
<reference key="3">
    <citation type="journal article" date="2005" name="Science">
        <title>The transcriptional landscape of the mammalian genome.</title>
        <authorList>
            <person name="Carninci P."/>
            <person name="Kasukawa T."/>
            <person name="Katayama S."/>
            <person name="Gough J."/>
            <person name="Frith M.C."/>
            <person name="Maeda N."/>
            <person name="Oyama R."/>
            <person name="Ravasi T."/>
            <person name="Lenhard B."/>
            <person name="Wells C."/>
            <person name="Kodzius R."/>
            <person name="Shimokawa K."/>
            <person name="Bajic V.B."/>
            <person name="Brenner S.E."/>
            <person name="Batalov S."/>
            <person name="Forrest A.R."/>
            <person name="Zavolan M."/>
            <person name="Davis M.J."/>
            <person name="Wilming L.G."/>
            <person name="Aidinis V."/>
            <person name="Allen J.E."/>
            <person name="Ambesi-Impiombato A."/>
            <person name="Apweiler R."/>
            <person name="Aturaliya R.N."/>
            <person name="Bailey T.L."/>
            <person name="Bansal M."/>
            <person name="Baxter L."/>
            <person name="Beisel K.W."/>
            <person name="Bersano T."/>
            <person name="Bono H."/>
            <person name="Chalk A.M."/>
            <person name="Chiu K.P."/>
            <person name="Choudhary V."/>
            <person name="Christoffels A."/>
            <person name="Clutterbuck D.R."/>
            <person name="Crowe M.L."/>
            <person name="Dalla E."/>
            <person name="Dalrymple B.P."/>
            <person name="de Bono B."/>
            <person name="Della Gatta G."/>
            <person name="di Bernardo D."/>
            <person name="Down T."/>
            <person name="Engstrom P."/>
            <person name="Fagiolini M."/>
            <person name="Faulkner G."/>
            <person name="Fletcher C.F."/>
            <person name="Fukushima T."/>
            <person name="Furuno M."/>
            <person name="Futaki S."/>
            <person name="Gariboldi M."/>
            <person name="Georgii-Hemming P."/>
            <person name="Gingeras T.R."/>
            <person name="Gojobori T."/>
            <person name="Green R.E."/>
            <person name="Gustincich S."/>
            <person name="Harbers M."/>
            <person name="Hayashi Y."/>
            <person name="Hensch T.K."/>
            <person name="Hirokawa N."/>
            <person name="Hill D."/>
            <person name="Huminiecki L."/>
            <person name="Iacono M."/>
            <person name="Ikeo K."/>
            <person name="Iwama A."/>
            <person name="Ishikawa T."/>
            <person name="Jakt M."/>
            <person name="Kanapin A."/>
            <person name="Katoh M."/>
            <person name="Kawasawa Y."/>
            <person name="Kelso J."/>
            <person name="Kitamura H."/>
            <person name="Kitano H."/>
            <person name="Kollias G."/>
            <person name="Krishnan S.P."/>
            <person name="Kruger A."/>
            <person name="Kummerfeld S.K."/>
            <person name="Kurochkin I.V."/>
            <person name="Lareau L.F."/>
            <person name="Lazarevic D."/>
            <person name="Lipovich L."/>
            <person name="Liu J."/>
            <person name="Liuni S."/>
            <person name="McWilliam S."/>
            <person name="Madan Babu M."/>
            <person name="Madera M."/>
            <person name="Marchionni L."/>
            <person name="Matsuda H."/>
            <person name="Matsuzawa S."/>
            <person name="Miki H."/>
            <person name="Mignone F."/>
            <person name="Miyake S."/>
            <person name="Morris K."/>
            <person name="Mottagui-Tabar S."/>
            <person name="Mulder N."/>
            <person name="Nakano N."/>
            <person name="Nakauchi H."/>
            <person name="Ng P."/>
            <person name="Nilsson R."/>
            <person name="Nishiguchi S."/>
            <person name="Nishikawa S."/>
            <person name="Nori F."/>
            <person name="Ohara O."/>
            <person name="Okazaki Y."/>
            <person name="Orlando V."/>
            <person name="Pang K.C."/>
            <person name="Pavan W.J."/>
            <person name="Pavesi G."/>
            <person name="Pesole G."/>
            <person name="Petrovsky N."/>
            <person name="Piazza S."/>
            <person name="Reed J."/>
            <person name="Reid J.F."/>
            <person name="Ring B.Z."/>
            <person name="Ringwald M."/>
            <person name="Rost B."/>
            <person name="Ruan Y."/>
            <person name="Salzberg S.L."/>
            <person name="Sandelin A."/>
            <person name="Schneider C."/>
            <person name="Schoenbach C."/>
            <person name="Sekiguchi K."/>
            <person name="Semple C.A."/>
            <person name="Seno S."/>
            <person name="Sessa L."/>
            <person name="Sheng Y."/>
            <person name="Shibata Y."/>
            <person name="Shimada H."/>
            <person name="Shimada K."/>
            <person name="Silva D."/>
            <person name="Sinclair B."/>
            <person name="Sperling S."/>
            <person name="Stupka E."/>
            <person name="Sugiura K."/>
            <person name="Sultana R."/>
            <person name="Takenaka Y."/>
            <person name="Taki K."/>
            <person name="Tammoja K."/>
            <person name="Tan S.L."/>
            <person name="Tang S."/>
            <person name="Taylor M.S."/>
            <person name="Tegner J."/>
            <person name="Teichmann S.A."/>
            <person name="Ueda H.R."/>
            <person name="van Nimwegen E."/>
            <person name="Verardo R."/>
            <person name="Wei C.L."/>
            <person name="Yagi K."/>
            <person name="Yamanishi H."/>
            <person name="Zabarovsky E."/>
            <person name="Zhu S."/>
            <person name="Zimmer A."/>
            <person name="Hide W."/>
            <person name="Bult C."/>
            <person name="Grimmond S.M."/>
            <person name="Teasdale R.D."/>
            <person name="Liu E.T."/>
            <person name="Brusic V."/>
            <person name="Quackenbush J."/>
            <person name="Wahlestedt C."/>
            <person name="Mattick J.S."/>
            <person name="Hume D.A."/>
            <person name="Kai C."/>
            <person name="Sasaki D."/>
            <person name="Tomaru Y."/>
            <person name="Fukuda S."/>
            <person name="Kanamori-Katayama M."/>
            <person name="Suzuki M."/>
            <person name="Aoki J."/>
            <person name="Arakawa T."/>
            <person name="Iida J."/>
            <person name="Imamura K."/>
            <person name="Itoh M."/>
            <person name="Kato T."/>
            <person name="Kawaji H."/>
            <person name="Kawagashira N."/>
            <person name="Kawashima T."/>
            <person name="Kojima M."/>
            <person name="Kondo S."/>
            <person name="Konno H."/>
            <person name="Nakano K."/>
            <person name="Ninomiya N."/>
            <person name="Nishio T."/>
            <person name="Okada M."/>
            <person name="Plessy C."/>
            <person name="Shibata K."/>
            <person name="Shiraki T."/>
            <person name="Suzuki S."/>
            <person name="Tagami M."/>
            <person name="Waki K."/>
            <person name="Watahiki A."/>
            <person name="Okamura-Oho Y."/>
            <person name="Suzuki H."/>
            <person name="Kawai J."/>
            <person name="Hayashizaki Y."/>
        </authorList>
    </citation>
    <scope>NUCLEOTIDE SEQUENCE [LARGE SCALE MRNA]</scope>
    <source>
        <strain>C57BL/6J</strain>
        <tissue>Hypothalamus</tissue>
    </source>
</reference>
<reference key="4">
    <citation type="journal article" date="2004" name="Genome Res.">
        <title>The status, quality, and expansion of the NIH full-length cDNA project: the Mammalian Gene Collection (MGC).</title>
        <authorList>
            <consortium name="The MGC Project Team"/>
        </authorList>
    </citation>
    <scope>NUCLEOTIDE SEQUENCE [LARGE SCALE MRNA]</scope>
    <source>
        <tissue>Brain</tissue>
    </source>
</reference>
<evidence type="ECO:0000255" key="1">
    <source>
        <dbReference type="PROSITE-ProRule" id="PRU00201"/>
    </source>
</evidence>
<evidence type="ECO:0000269" key="2">
    <source>
    </source>
</evidence>
<evidence type="ECO:0000305" key="3"/>
<evidence type="ECO:0000312" key="4">
    <source>
        <dbReference type="MGI" id="MGI:1891158"/>
    </source>
</evidence>
<gene>
    <name evidence="4" type="primary">Tbx19</name>
    <name type="synonym">Tpit</name>
</gene>
<proteinExistence type="evidence at transcript level"/>
<sequence>MSELATQKAGEGTVSRLLNVVESELQAGREKGDPTEKQLQIILEDAPLWQRFKEVTNEMIVTKNGRRMFPVLKISVTGLDPNAMYSLLLDFVRTDSHRWKYVNGEWVPAGKPEVSSHSCVYIHPDSPNFGAHWMKAPISFSKVKLTNKLNGGGQIMLNSLHKYEPQVHIVRVGGAHRMVMNCSFPETQFIAVTAYQNEEITALKIKYNPFAKAFLDAKERNHLKDVPEAISESQHVTYSHLGGWILSNPDGVCTAANSNYQYATPLPLPAPHTHHGCEHYAGLRGHRQAPYPSAYMHRNHSPSVNLIESSSNNLQVFSGPDSWTSLSSTPHASILSVPHSNGPINPGPSPYPCLWTISNGGGGPVASGSEVHASTSGTILLGNPAVTSPSSLLPTQATTSAGVEVLGEPSLTSIAVSTWTAVASHPLPGWGGPGGAGRHSSSSLDS</sequence>